<organism>
    <name type="scientific">Laribacter hongkongensis (strain HLHK9)</name>
    <dbReference type="NCBI Taxonomy" id="557598"/>
    <lineage>
        <taxon>Bacteria</taxon>
        <taxon>Pseudomonadati</taxon>
        <taxon>Pseudomonadota</taxon>
        <taxon>Betaproteobacteria</taxon>
        <taxon>Neisseriales</taxon>
        <taxon>Aquaspirillaceae</taxon>
        <taxon>Laribacter</taxon>
    </lineage>
</organism>
<evidence type="ECO:0000255" key="1">
    <source>
        <dbReference type="HAMAP-Rule" id="MF_01810"/>
    </source>
</evidence>
<evidence type="ECO:0000256" key="2">
    <source>
        <dbReference type="SAM" id="MobiDB-lite"/>
    </source>
</evidence>
<feature type="chain" id="PRO_1000187675" description="Membrane protein insertase YidC">
    <location>
        <begin position="1"/>
        <end position="550"/>
    </location>
</feature>
<feature type="transmembrane region" description="Helical" evidence="1">
    <location>
        <begin position="6"/>
        <end position="26"/>
    </location>
</feature>
<feature type="transmembrane region" description="Helical" evidence="1">
    <location>
        <begin position="360"/>
        <end position="380"/>
    </location>
</feature>
<feature type="transmembrane region" description="Helical" evidence="1">
    <location>
        <begin position="430"/>
        <end position="450"/>
    </location>
</feature>
<feature type="transmembrane region" description="Helical" evidence="1">
    <location>
        <begin position="472"/>
        <end position="492"/>
    </location>
</feature>
<feature type="transmembrane region" description="Helical" evidence="1">
    <location>
        <begin position="504"/>
        <end position="524"/>
    </location>
</feature>
<feature type="region of interest" description="Disordered" evidence="2">
    <location>
        <begin position="30"/>
        <end position="59"/>
    </location>
</feature>
<dbReference type="EMBL" id="CP001154">
    <property type="protein sequence ID" value="ACO76213.1"/>
    <property type="molecule type" value="Genomic_DNA"/>
</dbReference>
<dbReference type="RefSeq" id="WP_012698676.1">
    <property type="nucleotide sequence ID" value="NC_012559.1"/>
</dbReference>
<dbReference type="SMR" id="C1D6H8"/>
<dbReference type="STRING" id="557598.LHK_03236"/>
<dbReference type="KEGG" id="lhk:LHK_03236"/>
<dbReference type="eggNOG" id="COG0706">
    <property type="taxonomic scope" value="Bacteria"/>
</dbReference>
<dbReference type="HOGENOM" id="CLU_016535_3_0_4"/>
<dbReference type="Proteomes" id="UP000002010">
    <property type="component" value="Chromosome"/>
</dbReference>
<dbReference type="GO" id="GO:0005886">
    <property type="term" value="C:plasma membrane"/>
    <property type="evidence" value="ECO:0007669"/>
    <property type="project" value="UniProtKB-SubCell"/>
</dbReference>
<dbReference type="GO" id="GO:0032977">
    <property type="term" value="F:membrane insertase activity"/>
    <property type="evidence" value="ECO:0007669"/>
    <property type="project" value="InterPro"/>
</dbReference>
<dbReference type="GO" id="GO:0051205">
    <property type="term" value="P:protein insertion into membrane"/>
    <property type="evidence" value="ECO:0007669"/>
    <property type="project" value="TreeGrafter"/>
</dbReference>
<dbReference type="GO" id="GO:0015031">
    <property type="term" value="P:protein transport"/>
    <property type="evidence" value="ECO:0007669"/>
    <property type="project" value="UniProtKB-KW"/>
</dbReference>
<dbReference type="CDD" id="cd20070">
    <property type="entry name" value="5TM_YidC_Alb3"/>
    <property type="match status" value="1"/>
</dbReference>
<dbReference type="CDD" id="cd19961">
    <property type="entry name" value="EcYidC-like_peri"/>
    <property type="match status" value="1"/>
</dbReference>
<dbReference type="Gene3D" id="2.70.98.90">
    <property type="match status" value="1"/>
</dbReference>
<dbReference type="HAMAP" id="MF_01810">
    <property type="entry name" value="YidC_type1"/>
    <property type="match status" value="1"/>
</dbReference>
<dbReference type="InterPro" id="IPR019998">
    <property type="entry name" value="Membr_insert_YidC"/>
</dbReference>
<dbReference type="InterPro" id="IPR028053">
    <property type="entry name" value="Membr_insert_YidC_N"/>
</dbReference>
<dbReference type="InterPro" id="IPR001708">
    <property type="entry name" value="YidC/ALB3/OXA1/COX18"/>
</dbReference>
<dbReference type="InterPro" id="IPR028055">
    <property type="entry name" value="YidC/Oxa/ALB_C"/>
</dbReference>
<dbReference type="InterPro" id="IPR047196">
    <property type="entry name" value="YidC_ALB_C"/>
</dbReference>
<dbReference type="InterPro" id="IPR038221">
    <property type="entry name" value="YidC_periplasmic_sf"/>
</dbReference>
<dbReference type="NCBIfam" id="NF002352">
    <property type="entry name" value="PRK01318.1-3"/>
    <property type="match status" value="1"/>
</dbReference>
<dbReference type="NCBIfam" id="TIGR03593">
    <property type="entry name" value="yidC_nterm"/>
    <property type="match status" value="1"/>
</dbReference>
<dbReference type="NCBIfam" id="TIGR03592">
    <property type="entry name" value="yidC_oxa1_cterm"/>
    <property type="match status" value="1"/>
</dbReference>
<dbReference type="PANTHER" id="PTHR12428:SF65">
    <property type="entry name" value="CYTOCHROME C OXIDASE ASSEMBLY PROTEIN COX18, MITOCHONDRIAL"/>
    <property type="match status" value="1"/>
</dbReference>
<dbReference type="PANTHER" id="PTHR12428">
    <property type="entry name" value="OXA1"/>
    <property type="match status" value="1"/>
</dbReference>
<dbReference type="Pfam" id="PF02096">
    <property type="entry name" value="60KD_IMP"/>
    <property type="match status" value="1"/>
</dbReference>
<dbReference type="Pfam" id="PF14849">
    <property type="entry name" value="YidC_periplas"/>
    <property type="match status" value="1"/>
</dbReference>
<dbReference type="PRINTS" id="PR00701">
    <property type="entry name" value="60KDINNERMP"/>
</dbReference>
<dbReference type="PRINTS" id="PR01900">
    <property type="entry name" value="YIDCPROTEIN"/>
</dbReference>
<accession>C1D6H8</accession>
<keyword id="KW-0997">Cell inner membrane</keyword>
<keyword id="KW-1003">Cell membrane</keyword>
<keyword id="KW-0143">Chaperone</keyword>
<keyword id="KW-0472">Membrane</keyword>
<keyword id="KW-0653">Protein transport</keyword>
<keyword id="KW-1185">Reference proteome</keyword>
<keyword id="KW-0812">Transmembrane</keyword>
<keyword id="KW-1133">Transmembrane helix</keyword>
<keyword id="KW-0813">Transport</keyword>
<protein>
    <recommendedName>
        <fullName evidence="1">Membrane protein insertase YidC</fullName>
    </recommendedName>
    <alternativeName>
        <fullName evidence="1">Foldase YidC</fullName>
    </alternativeName>
    <alternativeName>
        <fullName evidence="1">Membrane integrase YidC</fullName>
    </alternativeName>
    <alternativeName>
        <fullName evidence="1">Membrane protein YidC</fullName>
    </alternativeName>
</protein>
<gene>
    <name evidence="1" type="primary">yidC</name>
    <name type="ordered locus">LHK_03236</name>
</gene>
<proteinExistence type="inferred from homology"/>
<comment type="function">
    <text evidence="1">Required for the insertion and/or proper folding and/or complex formation of integral membrane proteins into the membrane. Involved in integration of membrane proteins that insert both dependently and independently of the Sec translocase complex, as well as at least some lipoproteins. Aids folding of multispanning membrane proteins.</text>
</comment>
<comment type="subunit">
    <text evidence="1">Interacts with the Sec translocase complex via SecD. Specifically interacts with transmembrane segments of nascent integral membrane proteins during membrane integration.</text>
</comment>
<comment type="subcellular location">
    <subcellularLocation>
        <location evidence="1">Cell inner membrane</location>
        <topology evidence="1">Multi-pass membrane protein</topology>
    </subcellularLocation>
</comment>
<comment type="similarity">
    <text evidence="1">Belongs to the OXA1/ALB3/YidC family. Type 1 subfamily.</text>
</comment>
<reference key="1">
    <citation type="journal article" date="2009" name="PLoS Genet.">
        <title>The complete genome and proteome of Laribacter hongkongensis reveal potential mechanisms for adaptations to different temperatures and habitats.</title>
        <authorList>
            <person name="Woo P.C.Y."/>
            <person name="Lau S.K.P."/>
            <person name="Tse H."/>
            <person name="Teng J.L.L."/>
            <person name="Curreem S.O."/>
            <person name="Tsang A.K.L."/>
            <person name="Fan R.Y.Y."/>
            <person name="Wong G.K.M."/>
            <person name="Huang Y."/>
            <person name="Loman N.J."/>
            <person name="Snyder L.A.S."/>
            <person name="Cai J.J."/>
            <person name="Huang J.-D."/>
            <person name="Mak W."/>
            <person name="Pallen M.J."/>
            <person name="Lok S."/>
            <person name="Yuen K.-Y."/>
        </authorList>
    </citation>
    <scope>NUCLEOTIDE SEQUENCE [LARGE SCALE GENOMIC DNA]</scope>
    <source>
        <strain>HLHK9</strain>
    </source>
</reference>
<name>YIDC_LARHH</name>
<sequence>MDTKRLIVFIVLSFGLLFVWQEYFAPKPQPKPVAAAVQPDGTPAPATARPADSPATGKLTSAQTITVTTDLVKAQINTAGGDIRSLELLTQGAIDNPDKPFMLMTEQGGRTYVAQSGLLSSDASLPTHKTLYAADKTAYTLLPDQNTLTVTLAAAPVNGVEVKKIFTFKRDSYVIDVRYDIINHSDKPVDATAYYRLLRDGKAPEGESSMAHTFTGPAVYTETGKFQKVSFEDLAKGKGDYVRQADNGWVAMVQHYFVSAWILKTNDGKSVCSSAEACQFELKPAAGDLYSAGVLVKLPVVAAGQQYSIDMPLYAGPEDTRRMATVAPGLVLTKDYGWVTIIATPLFWLLDKLYGLVHNWGWAIVLLTVLVKAAFYPLSAASYRSMAKMKALAPRMQRLKEQYGDDRQKFQQATMEMYKTEKVNPLGGCLPIVVQIPVFIGLYWALLASVELRQAPWILWIHDLAKPDPYYILPALMAATMYLQTFLNPPPADPLQAKMMKIMPLAFSVMFFFFPAGLVLYWLVNNILSIAQQWWVNKQIEKDAAKAKSS</sequence>